<protein>
    <recommendedName>
        <fullName evidence="1">NAD(P)H-quinone oxidoreductase subunit I, chloroplastic</fullName>
        <ecNumber evidence="1">7.1.1.-</ecNumber>
    </recommendedName>
    <alternativeName>
        <fullName evidence="1">NAD(P)H dehydrogenase subunit I</fullName>
        <shortName evidence="1">NDH subunit I</shortName>
    </alternativeName>
    <alternativeName>
        <fullName evidence="1">NADH-plastoquinone oxidoreductase subunit I</fullName>
    </alternativeName>
</protein>
<organism>
    <name type="scientific">Greenmaniella resinosa</name>
    <name type="common">Zaluzania resinosa</name>
    <dbReference type="NCBI Taxonomy" id="183032"/>
    <lineage>
        <taxon>Eukaryota</taxon>
        <taxon>Viridiplantae</taxon>
        <taxon>Streptophyta</taxon>
        <taxon>Embryophyta</taxon>
        <taxon>Tracheophyta</taxon>
        <taxon>Spermatophyta</taxon>
        <taxon>Magnoliopsida</taxon>
        <taxon>eudicotyledons</taxon>
        <taxon>Gunneridae</taxon>
        <taxon>Pentapetalae</taxon>
        <taxon>asterids</taxon>
        <taxon>campanulids</taxon>
        <taxon>Asterales</taxon>
        <taxon>Asteraceae</taxon>
        <taxon>Asteroideae</taxon>
        <taxon>Heliantheae alliance</taxon>
        <taxon>Neurolaeneae</taxon>
        <taxon>Greenmaniella</taxon>
    </lineage>
</organism>
<feature type="chain" id="PRO_0000250793" description="NAD(P)H-quinone oxidoreductase subunit I, chloroplastic">
    <location>
        <begin position="1"/>
        <end position="166"/>
    </location>
</feature>
<feature type="domain" description="4Fe-4S ferredoxin-type 1" evidence="1">
    <location>
        <begin position="55"/>
        <end position="84"/>
    </location>
</feature>
<feature type="domain" description="4Fe-4S ferredoxin-type 2" evidence="1">
    <location>
        <begin position="95"/>
        <end position="124"/>
    </location>
</feature>
<feature type="binding site" evidence="1">
    <location>
        <position position="64"/>
    </location>
    <ligand>
        <name>[4Fe-4S] cluster</name>
        <dbReference type="ChEBI" id="CHEBI:49883"/>
        <label>1</label>
    </ligand>
</feature>
<feature type="binding site" evidence="1">
    <location>
        <position position="67"/>
    </location>
    <ligand>
        <name>[4Fe-4S] cluster</name>
        <dbReference type="ChEBI" id="CHEBI:49883"/>
        <label>1</label>
    </ligand>
</feature>
<feature type="binding site" evidence="1">
    <location>
        <position position="70"/>
    </location>
    <ligand>
        <name>[4Fe-4S] cluster</name>
        <dbReference type="ChEBI" id="CHEBI:49883"/>
        <label>1</label>
    </ligand>
</feature>
<feature type="binding site" evidence="1">
    <location>
        <position position="74"/>
    </location>
    <ligand>
        <name>[4Fe-4S] cluster</name>
        <dbReference type="ChEBI" id="CHEBI:49883"/>
        <label>2</label>
    </ligand>
</feature>
<feature type="binding site" evidence="1">
    <location>
        <position position="104"/>
    </location>
    <ligand>
        <name>[4Fe-4S] cluster</name>
        <dbReference type="ChEBI" id="CHEBI:49883"/>
        <label>2</label>
    </ligand>
</feature>
<feature type="binding site" evidence="1">
    <location>
        <position position="107"/>
    </location>
    <ligand>
        <name>[4Fe-4S] cluster</name>
        <dbReference type="ChEBI" id="CHEBI:49883"/>
        <label>2</label>
    </ligand>
</feature>
<feature type="binding site" evidence="1">
    <location>
        <position position="110"/>
    </location>
    <ligand>
        <name>[4Fe-4S] cluster</name>
        <dbReference type="ChEBI" id="CHEBI:49883"/>
        <label>2</label>
    </ligand>
</feature>
<feature type="binding site" evidence="1">
    <location>
        <position position="114"/>
    </location>
    <ligand>
        <name>[4Fe-4S] cluster</name>
        <dbReference type="ChEBI" id="CHEBI:49883"/>
        <label>1</label>
    </ligand>
</feature>
<keyword id="KW-0004">4Fe-4S</keyword>
<keyword id="KW-0150">Chloroplast</keyword>
<keyword id="KW-0408">Iron</keyword>
<keyword id="KW-0411">Iron-sulfur</keyword>
<keyword id="KW-0472">Membrane</keyword>
<keyword id="KW-0479">Metal-binding</keyword>
<keyword id="KW-0520">NAD</keyword>
<keyword id="KW-0521">NADP</keyword>
<keyword id="KW-0934">Plastid</keyword>
<keyword id="KW-0618">Plastoquinone</keyword>
<keyword id="KW-0874">Quinone</keyword>
<keyword id="KW-0677">Repeat</keyword>
<keyword id="KW-0793">Thylakoid</keyword>
<keyword id="KW-1278">Translocase</keyword>
<dbReference type="EC" id="7.1.1.-" evidence="1"/>
<dbReference type="EMBL" id="AF383793">
    <property type="protein sequence ID" value="AAN61734.1"/>
    <property type="molecule type" value="Genomic_DNA"/>
</dbReference>
<dbReference type="RefSeq" id="YP_010923795.1">
    <property type="nucleotide sequence ID" value="NC_081937.1"/>
</dbReference>
<dbReference type="SMR" id="Q8HVS0"/>
<dbReference type="GeneID" id="84334887"/>
<dbReference type="GO" id="GO:0009535">
    <property type="term" value="C:chloroplast thylakoid membrane"/>
    <property type="evidence" value="ECO:0007669"/>
    <property type="project" value="UniProtKB-SubCell"/>
</dbReference>
<dbReference type="GO" id="GO:0051539">
    <property type="term" value="F:4 iron, 4 sulfur cluster binding"/>
    <property type="evidence" value="ECO:0007669"/>
    <property type="project" value="UniProtKB-KW"/>
</dbReference>
<dbReference type="GO" id="GO:0005506">
    <property type="term" value="F:iron ion binding"/>
    <property type="evidence" value="ECO:0007669"/>
    <property type="project" value="UniProtKB-UniRule"/>
</dbReference>
<dbReference type="GO" id="GO:0008137">
    <property type="term" value="F:NADH dehydrogenase (ubiquinone) activity"/>
    <property type="evidence" value="ECO:0007669"/>
    <property type="project" value="InterPro"/>
</dbReference>
<dbReference type="GO" id="GO:0048038">
    <property type="term" value="F:quinone binding"/>
    <property type="evidence" value="ECO:0007669"/>
    <property type="project" value="UniProtKB-KW"/>
</dbReference>
<dbReference type="GO" id="GO:0019684">
    <property type="term" value="P:photosynthesis, light reaction"/>
    <property type="evidence" value="ECO:0007669"/>
    <property type="project" value="UniProtKB-UniRule"/>
</dbReference>
<dbReference type="FunFam" id="3.30.70.3270:FF:000006">
    <property type="entry name" value="NAD(P)H-quinone oxidoreductase subunit I, chloroplastic"/>
    <property type="match status" value="1"/>
</dbReference>
<dbReference type="Gene3D" id="3.30.70.3270">
    <property type="match status" value="1"/>
</dbReference>
<dbReference type="HAMAP" id="MF_01351">
    <property type="entry name" value="NDH1_NuoI"/>
    <property type="match status" value="1"/>
</dbReference>
<dbReference type="InterPro" id="IPR017896">
    <property type="entry name" value="4Fe4S_Fe-S-bd"/>
</dbReference>
<dbReference type="InterPro" id="IPR017900">
    <property type="entry name" value="4Fe4S_Fe_S_CS"/>
</dbReference>
<dbReference type="InterPro" id="IPR010226">
    <property type="entry name" value="NADH_quinone_OxRdtase_chainI"/>
</dbReference>
<dbReference type="InterPro" id="IPR004497">
    <property type="entry name" value="NDHI"/>
</dbReference>
<dbReference type="NCBIfam" id="TIGR00403">
    <property type="entry name" value="ndhI"/>
    <property type="match status" value="1"/>
</dbReference>
<dbReference type="NCBIfam" id="TIGR01971">
    <property type="entry name" value="NuoI"/>
    <property type="match status" value="1"/>
</dbReference>
<dbReference type="NCBIfam" id="NF004537">
    <property type="entry name" value="PRK05888.1-3"/>
    <property type="match status" value="1"/>
</dbReference>
<dbReference type="PANTHER" id="PTHR47275">
    <property type="entry name" value="NAD(P)H-QUINONE OXIDOREDUCTASE SUBUNIT I, CHLOROPLASTIC"/>
    <property type="match status" value="1"/>
</dbReference>
<dbReference type="PANTHER" id="PTHR47275:SF1">
    <property type="entry name" value="NAD(P)H-QUINONE OXIDOREDUCTASE SUBUNIT I, CHLOROPLASTIC"/>
    <property type="match status" value="1"/>
</dbReference>
<dbReference type="Pfam" id="PF00037">
    <property type="entry name" value="Fer4"/>
    <property type="match status" value="2"/>
</dbReference>
<dbReference type="SUPFAM" id="SSF54862">
    <property type="entry name" value="4Fe-4S ferredoxins"/>
    <property type="match status" value="1"/>
</dbReference>
<dbReference type="PROSITE" id="PS00198">
    <property type="entry name" value="4FE4S_FER_1"/>
    <property type="match status" value="2"/>
</dbReference>
<dbReference type="PROSITE" id="PS51379">
    <property type="entry name" value="4FE4S_FER_2"/>
    <property type="match status" value="2"/>
</dbReference>
<geneLocation type="chloroplast"/>
<reference key="1">
    <citation type="submission" date="2003-01" db="EMBL/GenBank/DDBJ databases">
        <title>Chloroplast DNA phylogeny of tribe Heliantheae (Asteraceae).</title>
        <authorList>
            <person name="Panero J.L."/>
            <person name="Baldwin B.G."/>
            <person name="Schilling E.E."/>
            <person name="Clevinger J.A."/>
        </authorList>
    </citation>
    <scope>NUCLEOTIDE SEQUENCE [GENOMIC DNA]</scope>
</reference>
<proteinExistence type="inferred from homology"/>
<accession>Q8HVS0</accession>
<name>NDHI_GRERE</name>
<gene>
    <name evidence="1" type="primary">ndhI</name>
</gene>
<sequence>MFPMVTEFMNYGQQTVRAARYIGQGFMITLSHANRLPVTIQYPYEKLITSERFRGRIHFEFDKCIACEVCVRVCPIDLPVVDWKLETDIRKKRLLNYSIDFGICIFCGNCVEYCPTNCLSMTEEYELSTYDRHELNYNQIALGRLPMSIIDDYTIRTILNLPEIKT</sequence>
<comment type="function">
    <text evidence="1">NDH shuttles electrons from NAD(P)H:plastoquinone, via FMN and iron-sulfur (Fe-S) centers, to quinones in the photosynthetic chain and possibly in a chloroplast respiratory chain. The immediate electron acceptor for the enzyme in this species is believed to be plastoquinone. Couples the redox reaction to proton translocation, and thus conserves the redox energy in a proton gradient.</text>
</comment>
<comment type="catalytic activity">
    <reaction evidence="1">
        <text>a plastoquinone + NADH + (n+1) H(+)(in) = a plastoquinol + NAD(+) + n H(+)(out)</text>
        <dbReference type="Rhea" id="RHEA:42608"/>
        <dbReference type="Rhea" id="RHEA-COMP:9561"/>
        <dbReference type="Rhea" id="RHEA-COMP:9562"/>
        <dbReference type="ChEBI" id="CHEBI:15378"/>
        <dbReference type="ChEBI" id="CHEBI:17757"/>
        <dbReference type="ChEBI" id="CHEBI:57540"/>
        <dbReference type="ChEBI" id="CHEBI:57945"/>
        <dbReference type="ChEBI" id="CHEBI:62192"/>
    </reaction>
</comment>
<comment type="catalytic activity">
    <reaction evidence="1">
        <text>a plastoquinone + NADPH + (n+1) H(+)(in) = a plastoquinol + NADP(+) + n H(+)(out)</text>
        <dbReference type="Rhea" id="RHEA:42612"/>
        <dbReference type="Rhea" id="RHEA-COMP:9561"/>
        <dbReference type="Rhea" id="RHEA-COMP:9562"/>
        <dbReference type="ChEBI" id="CHEBI:15378"/>
        <dbReference type="ChEBI" id="CHEBI:17757"/>
        <dbReference type="ChEBI" id="CHEBI:57783"/>
        <dbReference type="ChEBI" id="CHEBI:58349"/>
        <dbReference type="ChEBI" id="CHEBI:62192"/>
    </reaction>
</comment>
<comment type="cofactor">
    <cofactor evidence="1">
        <name>[4Fe-4S] cluster</name>
        <dbReference type="ChEBI" id="CHEBI:49883"/>
    </cofactor>
    <text evidence="1">Binds 2 [4Fe-4S] clusters per subunit.</text>
</comment>
<comment type="subunit">
    <text evidence="1">NDH is composed of at least 16 different subunits, 5 of which are encoded in the nucleus.</text>
</comment>
<comment type="subcellular location">
    <subcellularLocation>
        <location evidence="1">Plastid</location>
        <location evidence="1">Chloroplast thylakoid membrane</location>
        <topology evidence="1">Peripheral membrane protein</topology>
    </subcellularLocation>
</comment>
<comment type="similarity">
    <text evidence="1">Belongs to the complex I 23 kDa subunit family.</text>
</comment>
<evidence type="ECO:0000255" key="1">
    <source>
        <dbReference type="HAMAP-Rule" id="MF_01351"/>
    </source>
</evidence>